<dbReference type="SMR" id="P58823"/>
<dbReference type="GlyCosmos" id="P58823">
    <property type="glycosylation" value="3 sites, No reported glycans"/>
</dbReference>
<dbReference type="GO" id="GO:0005576">
    <property type="term" value="C:extracellular region"/>
    <property type="evidence" value="ECO:0007669"/>
    <property type="project" value="UniProtKB-KW"/>
</dbReference>
<dbReference type="GO" id="GO:0016020">
    <property type="term" value="C:membrane"/>
    <property type="evidence" value="ECO:0007669"/>
    <property type="project" value="UniProtKB-SubCell"/>
</dbReference>
<dbReference type="GO" id="GO:0006952">
    <property type="term" value="P:defense response"/>
    <property type="evidence" value="ECO:0007669"/>
    <property type="project" value="UniProtKB-KW"/>
</dbReference>
<dbReference type="FunFam" id="3.80.10.10:FF:000041">
    <property type="entry name" value="LRR receptor-like serine/threonine-protein kinase ERECTA"/>
    <property type="match status" value="1"/>
</dbReference>
<dbReference type="Gene3D" id="3.80.10.10">
    <property type="entry name" value="Ribonuclease Inhibitor"/>
    <property type="match status" value="1"/>
</dbReference>
<dbReference type="InterPro" id="IPR001611">
    <property type="entry name" value="Leu-rich_rpt"/>
</dbReference>
<dbReference type="InterPro" id="IPR032675">
    <property type="entry name" value="LRR_dom_sf"/>
</dbReference>
<dbReference type="InterPro" id="IPR013210">
    <property type="entry name" value="LRR_N_plant-typ"/>
</dbReference>
<dbReference type="InterPro" id="IPR051848">
    <property type="entry name" value="PGIP"/>
</dbReference>
<dbReference type="PANTHER" id="PTHR48059:SF24">
    <property type="entry name" value="POLYGALACTURONASE INHIBITOR"/>
    <property type="match status" value="1"/>
</dbReference>
<dbReference type="PANTHER" id="PTHR48059">
    <property type="entry name" value="POLYGALACTURONASE INHIBITOR 1"/>
    <property type="match status" value="1"/>
</dbReference>
<dbReference type="Pfam" id="PF00560">
    <property type="entry name" value="LRR_1"/>
    <property type="match status" value="3"/>
</dbReference>
<dbReference type="Pfam" id="PF08263">
    <property type="entry name" value="LRRNT_2"/>
    <property type="match status" value="1"/>
</dbReference>
<dbReference type="SUPFAM" id="SSF52058">
    <property type="entry name" value="L domain-like"/>
    <property type="match status" value="1"/>
</dbReference>
<name>PGIP3_PHAVU</name>
<protein>
    <recommendedName>
        <fullName>Polygalacturonase inhibitor 3</fullName>
    </recommendedName>
    <alternativeName>
        <fullName>Polygalacturonase-inhibiting protein 3</fullName>
        <shortName>PGIP-3</shortName>
    </alternativeName>
</protein>
<sequence length="342" mass="37252">MTQFNIPVTMSSSLSIILVILVSLRTALSELCNPQDKQALLQIKKDLGNPTTLSSWLPTTDCCNRTWLGVLCDTDTQTYRVNNLDLSGHNLPKPYPIPSSLANLPYLNFLYIGGINNLVGPIPPAIAKLTQLHYLYITHTNVSGAIPDFLSQIKTLVTLDFSYNALSGTLPPSISSLPNLVGITFDGNRISGAIPDSYGSFSKLFTSMTISRNRLTGKIPPTFANLNLAFVDLSRNMLQGDASVLFGSDKNTQKIHLAKNSLDFDLEKVGLSKNLNGLDLRNNRIYGTLPQGLTQLKFLHSLNVSFNNLCGEIPQGGNLQRFDVSAYANNKCLCGSPLPACT</sequence>
<feature type="signal peptide" evidence="5">
    <location>
        <begin position="1"/>
        <end position="29"/>
    </location>
</feature>
<feature type="chain" id="PRO_0000023887" description="Polygalacturonase inhibitor 3">
    <location>
        <begin position="30"/>
        <end position="342"/>
    </location>
</feature>
<feature type="repeat" description="LRR 1" evidence="3">
    <location>
        <begin position="82"/>
        <end position="107"/>
    </location>
</feature>
<feature type="repeat" description="LRR 2" evidence="3">
    <location>
        <begin position="108"/>
        <end position="132"/>
    </location>
</feature>
<feature type="repeat" description="LRR 3" evidence="3">
    <location>
        <begin position="133"/>
        <end position="156"/>
    </location>
</feature>
<feature type="repeat" description="LRR 4" evidence="3">
    <location>
        <begin position="157"/>
        <end position="180"/>
    </location>
</feature>
<feature type="repeat" description="LRR 5" evidence="3">
    <location>
        <begin position="181"/>
        <end position="205"/>
    </location>
</feature>
<feature type="repeat" description="LRR 6" evidence="3">
    <location>
        <begin position="206"/>
        <end position="228"/>
    </location>
</feature>
<feature type="repeat" description="LRR 7" evidence="3">
    <location>
        <begin position="229"/>
        <end position="252"/>
    </location>
</feature>
<feature type="repeat" description="LRR 8" evidence="3">
    <location>
        <begin position="253"/>
        <end position="275"/>
    </location>
</feature>
<feature type="repeat" description="LRR 9" evidence="3">
    <location>
        <begin position="276"/>
        <end position="299"/>
    </location>
</feature>
<feature type="repeat" description="LRR 10" evidence="3">
    <location>
        <begin position="300"/>
        <end position="319"/>
    </location>
</feature>
<feature type="glycosylation site" description="N-linked (GlcNAc...) asparagine" evidence="4">
    <location>
        <position position="64"/>
    </location>
</feature>
<feature type="glycosylation site" description="N-linked (GlcNAc...) asparagine" evidence="4">
    <location>
        <position position="141"/>
    </location>
</feature>
<feature type="glycosylation site" description="N-linked (GlcNAc...) asparagine" evidence="4">
    <location>
        <position position="303"/>
    </location>
</feature>
<feature type="disulfide bond" evidence="2">
    <location>
        <begin position="32"/>
        <end position="62"/>
    </location>
</feature>
<feature type="disulfide bond" evidence="2">
    <location>
        <begin position="63"/>
        <end position="72"/>
    </location>
</feature>
<feature type="disulfide bond" evidence="2">
    <location>
        <begin position="310"/>
        <end position="332"/>
    </location>
</feature>
<feature type="disulfide bond" evidence="2">
    <location>
        <begin position="334"/>
        <end position="341"/>
    </location>
</feature>
<gene>
    <name type="primary">PGIP3</name>
</gene>
<organism>
    <name type="scientific">Phaseolus vulgaris</name>
    <name type="common">Kidney bean</name>
    <name type="synonym">French bean</name>
    <dbReference type="NCBI Taxonomy" id="3885"/>
    <lineage>
        <taxon>Eukaryota</taxon>
        <taxon>Viridiplantae</taxon>
        <taxon>Streptophyta</taxon>
        <taxon>Embryophyta</taxon>
        <taxon>Tracheophyta</taxon>
        <taxon>Spermatophyta</taxon>
        <taxon>Magnoliopsida</taxon>
        <taxon>eudicotyledons</taxon>
        <taxon>Gunneridae</taxon>
        <taxon>Pentapetalae</taxon>
        <taxon>rosids</taxon>
        <taxon>fabids</taxon>
        <taxon>Fabales</taxon>
        <taxon>Fabaceae</taxon>
        <taxon>Papilionoideae</taxon>
        <taxon>50 kb inversion clade</taxon>
        <taxon>NPAAA clade</taxon>
        <taxon>indigoferoid/millettioid clade</taxon>
        <taxon>Phaseoleae</taxon>
        <taxon>Phaseolus</taxon>
    </lineage>
</organism>
<accession>P58823</accession>
<reference key="1">
    <citation type="journal article" date="1992" name="Plant J.">
        <title>Cloning and characterization of the gene encoding the endopolygalacturonase-inhibiting protein (PGIP) of Phaseolus vulgaris L.</title>
        <authorList>
            <person name="Toubart P."/>
            <person name="Desiderio A."/>
            <person name="Salvi G."/>
            <person name="Cervone F."/>
            <person name="Daroda L."/>
            <person name="de Lorenzo G."/>
            <person name="Bergmann C."/>
            <person name="Darvill A.G."/>
            <person name="Albersheim P."/>
        </authorList>
    </citation>
    <scope>NUCLEOTIDE SEQUENCE</scope>
    <scope>PARTIAL PROTEIN SEQUENCE</scope>
    <scope>TISSUE SPECIFICITY</scope>
    <source>
        <strain>cv. Pinto</strain>
        <tissue>Hypocotyl</tissue>
    </source>
</reference>
<evidence type="ECO:0000250" key="1">
    <source>
        <dbReference type="UniProtKB" id="P35334"/>
    </source>
</evidence>
<evidence type="ECO:0000250" key="2">
    <source>
        <dbReference type="UniProtKB" id="P58822"/>
    </source>
</evidence>
<evidence type="ECO:0000255" key="3"/>
<evidence type="ECO:0000255" key="4">
    <source>
        <dbReference type="PROSITE-ProRule" id="PRU00498"/>
    </source>
</evidence>
<evidence type="ECO:0000269" key="5">
    <source>
    </source>
</evidence>
<evidence type="ECO:0000305" key="6"/>
<keyword id="KW-0134">Cell wall</keyword>
<keyword id="KW-0903">Direct protein sequencing</keyword>
<keyword id="KW-1015">Disulfide bond</keyword>
<keyword id="KW-0325">Glycoprotein</keyword>
<keyword id="KW-0433">Leucine-rich repeat</keyword>
<keyword id="KW-0472">Membrane</keyword>
<keyword id="KW-0611">Plant defense</keyword>
<keyword id="KW-0677">Repeat</keyword>
<keyword id="KW-0964">Secreted</keyword>
<keyword id="KW-0732">Signal</keyword>
<proteinExistence type="evidence at protein level"/>
<comment type="function">
    <text evidence="1">Inhibitor of fungal polygalacturonase. It is an important factor for plant resistance to phytopathogenic fungi.</text>
</comment>
<comment type="subcellular location">
    <subcellularLocation>
        <location evidence="2">Secreted</location>
        <location evidence="2">Cell wall</location>
    </subcellularLocation>
    <subcellularLocation>
        <location>Membrane</location>
        <topology>Peripheral membrane protein</topology>
    </subcellularLocation>
</comment>
<comment type="tissue specificity">
    <text evidence="5">Found in suspension-cultured cells and to a lesser extent in hypocotyls, leaves and flowers.</text>
</comment>
<comment type="similarity">
    <text evidence="6">Belongs to the polygalacturonase-inhibiting protein family.</text>
</comment>
<comment type="caution">
    <text evidence="6">It is uncertain whether Met-1 or Met-10 is the initiator.</text>
</comment>